<sequence length="443" mass="49195">MVKERKTELVEGFRHSVPYINTHRGKTFVIMLGGEAIEHENFSSIVNDIGLLHSLGIRLVVVYGARPQIDANLAAHHHEPLYHKNIRVTDAKTLELVKQAAGTLQLDITARLSMSLNNTPLQGAHINVVSGNFIIAQPLGVDDGVDYCHSGRIRRIDEDAIHRQLDSGAIVLMGPVAVSVTGESFNLTSEEIATQLAIKLKAEKMIGFCSSQGVTNDDGDIVSELFPNEAQARVEAQEEKGDYNSGTVRFLRGAVKACRSGVRRCHLISYQEDGALLQELFSRDGIGTQIVMESAEQIRRATINDIGGILELIRPLEQQGILVRRSREQLEMEIDKFTIIQRDNTTIACAALYPFPEEKIGEMACVAVHPDYRSSSRGEVLLERIAAQAKQSGLSKLFVLTTRSIHWFQERGFTPVDIDLLPESKKQLYNYQRKSKVLMADLG</sequence>
<protein>
    <recommendedName>
        <fullName>Amino-acid acetyltransferase</fullName>
        <ecNumber>2.3.1.1</ecNumber>
    </recommendedName>
    <alternativeName>
        <fullName>N-acetylglutamate synthase</fullName>
        <shortName>AGS</shortName>
        <shortName>NAGS</shortName>
    </alternativeName>
</protein>
<name>ARGA_ECOLI</name>
<feature type="chain" id="PRO_0000186790" description="Amino-acid acetyltransferase">
    <location>
        <begin position="1"/>
        <end position="443"/>
    </location>
</feature>
<feature type="domain" description="N-acetyltransferase">
    <location>
        <begin position="296"/>
        <end position="443"/>
    </location>
</feature>
<feature type="mutagenesis site" description="In EE17." evidence="2">
    <original>H</original>
    <variation>Y</variation>
    <location>
        <position position="15"/>
    </location>
</feature>
<feature type="mutagenesis site" description="In EE51." evidence="2">
    <original>Y</original>
    <variation>C</variation>
    <location>
        <position position="19"/>
    </location>
</feature>
<feature type="mutagenesis site" description="In PT2M217." evidence="2">
    <original>S</original>
    <variation>N</variation>
    <location>
        <position position="54"/>
    </location>
</feature>
<feature type="mutagenesis site" description="In EE11." evidence="2">
    <original>R</original>
    <variation>H</variation>
    <location>
        <position position="58"/>
    </location>
</feature>
<feature type="mutagenesis site" description="In PT2M216." evidence="2">
    <original>G</original>
    <variation>S</variation>
    <location>
        <position position="287"/>
    </location>
</feature>
<feature type="mutagenesis site" description="In PT2M217." evidence="2">
    <original>Q</original>
    <variation>R</variation>
    <location>
        <position position="432"/>
    </location>
</feature>
<organism>
    <name type="scientific">Escherichia coli (strain K12)</name>
    <dbReference type="NCBI Taxonomy" id="83333"/>
    <lineage>
        <taxon>Bacteria</taxon>
        <taxon>Pseudomonadati</taxon>
        <taxon>Pseudomonadota</taxon>
        <taxon>Gammaproteobacteria</taxon>
        <taxon>Enterobacterales</taxon>
        <taxon>Enterobacteriaceae</taxon>
        <taxon>Escherichia</taxon>
    </lineage>
</organism>
<gene>
    <name type="primary">argA</name>
    <name type="ordered locus">b2818</name>
    <name type="ordered locus">JW2786</name>
</gene>
<comment type="catalytic activity">
    <reaction evidence="1">
        <text>L-glutamate + acetyl-CoA = N-acetyl-L-glutamate + CoA + H(+)</text>
        <dbReference type="Rhea" id="RHEA:24292"/>
        <dbReference type="ChEBI" id="CHEBI:15378"/>
        <dbReference type="ChEBI" id="CHEBI:29985"/>
        <dbReference type="ChEBI" id="CHEBI:44337"/>
        <dbReference type="ChEBI" id="CHEBI:57287"/>
        <dbReference type="ChEBI" id="CHEBI:57288"/>
        <dbReference type="EC" id="2.3.1.1"/>
    </reaction>
</comment>
<comment type="activity regulation">
    <text evidence="1">Feedback inhibition by L-arginine.</text>
</comment>
<comment type="pathway">
    <text evidence="1">Amino-acid biosynthesis; L-arginine biosynthesis; N(2)-acetyl-L-ornithine from L-glutamate: step 1/4.</text>
</comment>
<comment type="subunit">
    <text evidence="4">Homohexamer.</text>
</comment>
<comment type="subcellular location">
    <subcellularLocation>
        <location evidence="4">Cytoplasm</location>
    </subcellularLocation>
</comment>
<comment type="miscellaneous">
    <text evidence="5">The mutant strains shown below are all feedback-resistant (fbr) strains exhibiting enhanced arginine biosynthesis.</text>
</comment>
<comment type="similarity">
    <text evidence="3">Belongs to the acetyltransferase family. ArgA subfamily.</text>
</comment>
<accession>P0A6C5</accession>
<accession>O68009</accession>
<accession>O68010</accession>
<accession>O68011</accession>
<accession>O68012</accession>
<accession>O68013</accession>
<accession>P08205</accession>
<accession>Q2MA19</accession>
<keyword id="KW-0012">Acyltransferase</keyword>
<keyword id="KW-0028">Amino-acid biosynthesis</keyword>
<keyword id="KW-0055">Arginine biosynthesis</keyword>
<keyword id="KW-0963">Cytoplasm</keyword>
<keyword id="KW-1185">Reference proteome</keyword>
<keyword id="KW-0808">Transferase</keyword>
<proteinExistence type="evidence at protein level"/>
<evidence type="ECO:0000269" key="1">
    <source>
    </source>
</evidence>
<evidence type="ECO:0000269" key="2">
    <source>
    </source>
</evidence>
<evidence type="ECO:0000305" key="3"/>
<evidence type="ECO:0000305" key="4">
    <source>
    </source>
</evidence>
<evidence type="ECO:0000305" key="5">
    <source>
    </source>
</evidence>
<dbReference type="EC" id="2.3.1.1"/>
<dbReference type="EMBL" id="Y00492">
    <property type="protein sequence ID" value="CAA68547.1"/>
    <property type="molecule type" value="Genomic_DNA"/>
</dbReference>
<dbReference type="EMBL" id="AF008115">
    <property type="protein sequence ID" value="AAC23443.1"/>
    <property type="molecule type" value="Genomic_DNA"/>
</dbReference>
<dbReference type="EMBL" id="AF008116">
    <property type="protein sequence ID" value="AAC23444.1"/>
    <property type="molecule type" value="Genomic_DNA"/>
</dbReference>
<dbReference type="EMBL" id="AF008117">
    <property type="protein sequence ID" value="AAC23445.1"/>
    <property type="molecule type" value="Genomic_DNA"/>
</dbReference>
<dbReference type="EMBL" id="AF008118">
    <property type="protein sequence ID" value="AAC23446.1"/>
    <property type="molecule type" value="Genomic_DNA"/>
</dbReference>
<dbReference type="EMBL" id="AF008119">
    <property type="protein sequence ID" value="AAC23447.1"/>
    <property type="molecule type" value="Genomic_DNA"/>
</dbReference>
<dbReference type="EMBL" id="U29581">
    <property type="protein sequence ID" value="AAB40465.1"/>
    <property type="molecule type" value="Genomic_DNA"/>
</dbReference>
<dbReference type="EMBL" id="U00096">
    <property type="protein sequence ID" value="AAC75857.1"/>
    <property type="molecule type" value="Genomic_DNA"/>
</dbReference>
<dbReference type="EMBL" id="AP009048">
    <property type="protein sequence ID" value="BAE76887.1"/>
    <property type="molecule type" value="Genomic_DNA"/>
</dbReference>
<dbReference type="PIR" id="A30372">
    <property type="entry name" value="XYECAA"/>
</dbReference>
<dbReference type="RefSeq" id="NP_417295.1">
    <property type="nucleotide sequence ID" value="NC_000913.3"/>
</dbReference>
<dbReference type="RefSeq" id="WP_000237947.1">
    <property type="nucleotide sequence ID" value="NZ_SSUV01000026.1"/>
</dbReference>
<dbReference type="SMR" id="P0A6C5"/>
<dbReference type="BioGRID" id="4262306">
    <property type="interactions" value="18"/>
</dbReference>
<dbReference type="DIP" id="DIP-48037N"/>
<dbReference type="FunCoup" id="P0A6C5">
    <property type="interactions" value="188"/>
</dbReference>
<dbReference type="IntAct" id="P0A6C5">
    <property type="interactions" value="3"/>
</dbReference>
<dbReference type="STRING" id="511145.b2818"/>
<dbReference type="PaxDb" id="511145-b2818"/>
<dbReference type="EnsemblBacteria" id="AAC75857">
    <property type="protein sequence ID" value="AAC75857"/>
    <property type="gene ID" value="b2818"/>
</dbReference>
<dbReference type="GeneID" id="75203790"/>
<dbReference type="GeneID" id="947289"/>
<dbReference type="KEGG" id="ecj:JW2786"/>
<dbReference type="KEGG" id="eco:b2818"/>
<dbReference type="KEGG" id="ecoc:C3026_15475"/>
<dbReference type="PATRIC" id="fig|1411691.4.peg.3918"/>
<dbReference type="EchoBASE" id="EB0061"/>
<dbReference type="eggNOG" id="COG0548">
    <property type="taxonomic scope" value="Bacteria"/>
</dbReference>
<dbReference type="eggNOG" id="COG1246">
    <property type="taxonomic scope" value="Bacteria"/>
</dbReference>
<dbReference type="HOGENOM" id="CLU_024773_0_0_6"/>
<dbReference type="InParanoid" id="P0A6C5"/>
<dbReference type="OMA" id="KRKYNWD"/>
<dbReference type="OrthoDB" id="9802238at2"/>
<dbReference type="PhylomeDB" id="P0A6C5"/>
<dbReference type="BioCyc" id="EcoCyc:N-ACETYLTRANSFER-MONOMER"/>
<dbReference type="BioCyc" id="MetaCyc:N-ACETYLTRANSFER-MONOMER"/>
<dbReference type="BRENDA" id="2.3.1.1">
    <property type="organism ID" value="2026"/>
</dbReference>
<dbReference type="SABIO-RK" id="P0A6C5"/>
<dbReference type="UniPathway" id="UPA00068">
    <property type="reaction ID" value="UER00106"/>
</dbReference>
<dbReference type="PRO" id="PR:P0A6C5"/>
<dbReference type="Proteomes" id="UP000000625">
    <property type="component" value="Chromosome"/>
</dbReference>
<dbReference type="GO" id="GO:0005737">
    <property type="term" value="C:cytoplasm"/>
    <property type="evidence" value="ECO:0007669"/>
    <property type="project" value="UniProtKB-SubCell"/>
</dbReference>
<dbReference type="GO" id="GO:0004358">
    <property type="term" value="F:glutamate N-acetyltransferase activity"/>
    <property type="evidence" value="ECO:0000314"/>
    <property type="project" value="EcoCyc"/>
</dbReference>
<dbReference type="GO" id="GO:0004042">
    <property type="term" value="F:L-glutamate N-acetyltransferase activity"/>
    <property type="evidence" value="ECO:0007669"/>
    <property type="project" value="UniProtKB-UniRule"/>
</dbReference>
<dbReference type="GO" id="GO:0006526">
    <property type="term" value="P:L-arginine biosynthetic process"/>
    <property type="evidence" value="ECO:0000314"/>
    <property type="project" value="EcoCyc"/>
</dbReference>
<dbReference type="CDD" id="cd04237">
    <property type="entry name" value="AAK_NAGS-ABP"/>
    <property type="match status" value="1"/>
</dbReference>
<dbReference type="CDD" id="cd04301">
    <property type="entry name" value="NAT_SF"/>
    <property type="match status" value="1"/>
</dbReference>
<dbReference type="FunFam" id="3.40.1160.10:FF:000005">
    <property type="entry name" value="Amino-acid acetyltransferase"/>
    <property type="match status" value="1"/>
</dbReference>
<dbReference type="FunFam" id="3.40.630.30:FF:000009">
    <property type="entry name" value="Amino-acid acetyltransferase"/>
    <property type="match status" value="1"/>
</dbReference>
<dbReference type="Gene3D" id="3.40.630.30">
    <property type="match status" value="1"/>
</dbReference>
<dbReference type="Gene3D" id="3.40.1160.10">
    <property type="entry name" value="Acetylglutamate kinase-like"/>
    <property type="match status" value="1"/>
</dbReference>
<dbReference type="HAMAP" id="MF_01105">
    <property type="entry name" value="N_acetyl_glu_synth"/>
    <property type="match status" value="1"/>
</dbReference>
<dbReference type="InterPro" id="IPR036393">
    <property type="entry name" value="AceGlu_kinase-like_sf"/>
</dbReference>
<dbReference type="InterPro" id="IPR016181">
    <property type="entry name" value="Acyl_CoA_acyltransferase"/>
</dbReference>
<dbReference type="InterPro" id="IPR001048">
    <property type="entry name" value="Asp/Glu/Uridylate_kinase"/>
</dbReference>
<dbReference type="InterPro" id="IPR000182">
    <property type="entry name" value="GNAT_dom"/>
</dbReference>
<dbReference type="InterPro" id="IPR033719">
    <property type="entry name" value="NAGS_kin"/>
</dbReference>
<dbReference type="InterPro" id="IPR010167">
    <property type="entry name" value="NH2A_AcTrfase"/>
</dbReference>
<dbReference type="NCBIfam" id="TIGR01890">
    <property type="entry name" value="N-Ac-Glu-synth"/>
    <property type="match status" value="1"/>
</dbReference>
<dbReference type="NCBIfam" id="NF003641">
    <property type="entry name" value="PRK05279.1"/>
    <property type="match status" value="1"/>
</dbReference>
<dbReference type="PANTHER" id="PTHR30602">
    <property type="entry name" value="AMINO-ACID ACETYLTRANSFERASE"/>
    <property type="match status" value="1"/>
</dbReference>
<dbReference type="PANTHER" id="PTHR30602:SF12">
    <property type="entry name" value="AMINO-ACID ACETYLTRANSFERASE NAGS1, CHLOROPLASTIC-RELATED"/>
    <property type="match status" value="1"/>
</dbReference>
<dbReference type="Pfam" id="PF00696">
    <property type="entry name" value="AA_kinase"/>
    <property type="match status" value="1"/>
</dbReference>
<dbReference type="Pfam" id="PF00583">
    <property type="entry name" value="Acetyltransf_1"/>
    <property type="match status" value="1"/>
</dbReference>
<dbReference type="PIRSF" id="PIRSF000423">
    <property type="entry name" value="ArgA"/>
    <property type="match status" value="1"/>
</dbReference>
<dbReference type="SUPFAM" id="SSF55729">
    <property type="entry name" value="Acyl-CoA N-acyltransferases (Nat)"/>
    <property type="match status" value="1"/>
</dbReference>
<dbReference type="SUPFAM" id="SSF53633">
    <property type="entry name" value="Carbamate kinase-like"/>
    <property type="match status" value="1"/>
</dbReference>
<dbReference type="PROSITE" id="PS51186">
    <property type="entry name" value="GNAT"/>
    <property type="match status" value="1"/>
</dbReference>
<reference key="1">
    <citation type="journal article" date="1987" name="Nucleic Acids Res.">
        <title>Complete nucleotide sequence of the Escherichia coli argA gene.</title>
        <authorList>
            <person name="Brown K."/>
            <person name="Finch P.W."/>
            <person name="Hickson I.D."/>
            <person name="Emmerson P.T."/>
        </authorList>
    </citation>
    <scope>NUCLEOTIDE SEQUENCE [GENOMIC DNA]</scope>
</reference>
<reference key="2">
    <citation type="journal article" date="1998" name="Appl. Environ. Microbiol.">
        <title>Use of inducible feedback-resistant N-acetylglutamate synthetase (argA) genes for enhanced arginine biosynthesis by genetically engineered Escherichia coli K-12 strains.</title>
        <authorList>
            <person name="Rajagopal B.S."/>
            <person name="Deponte J. III"/>
            <person name="Tuchman M."/>
            <person name="Malamy M.H."/>
        </authorList>
    </citation>
    <scope>NUCLEOTIDE SEQUENCE [GENOMIC DNA]</scope>
    <scope>MUTAGENESIS OF HIS-15; TYR-19; SER-54; ARG-58; GLY-287 AND GLN-432</scope>
    <source>
        <strain>K12 / Various isolates</strain>
    </source>
</reference>
<reference key="3">
    <citation type="journal article" date="1997" name="Science">
        <title>The complete genome sequence of Escherichia coli K-12.</title>
        <authorList>
            <person name="Blattner F.R."/>
            <person name="Plunkett G. III"/>
            <person name="Bloch C.A."/>
            <person name="Perna N.T."/>
            <person name="Burland V."/>
            <person name="Riley M."/>
            <person name="Collado-Vides J."/>
            <person name="Glasner J.D."/>
            <person name="Rode C.K."/>
            <person name="Mayhew G.F."/>
            <person name="Gregor J."/>
            <person name="Davis N.W."/>
            <person name="Kirkpatrick H.A."/>
            <person name="Goeden M.A."/>
            <person name="Rose D.J."/>
            <person name="Mau B."/>
            <person name="Shao Y."/>
        </authorList>
    </citation>
    <scope>NUCLEOTIDE SEQUENCE [LARGE SCALE GENOMIC DNA]</scope>
    <source>
        <strain>K12 / MG1655 / ATCC 47076</strain>
    </source>
</reference>
<reference key="4">
    <citation type="journal article" date="2006" name="Mol. Syst. Biol.">
        <title>Highly accurate genome sequences of Escherichia coli K-12 strains MG1655 and W3110.</title>
        <authorList>
            <person name="Hayashi K."/>
            <person name="Morooka N."/>
            <person name="Yamamoto Y."/>
            <person name="Fujita K."/>
            <person name="Isono K."/>
            <person name="Choi S."/>
            <person name="Ohtsubo E."/>
            <person name="Baba T."/>
            <person name="Wanner B.L."/>
            <person name="Mori H."/>
            <person name="Horiuchi T."/>
        </authorList>
    </citation>
    <scope>NUCLEOTIDE SEQUENCE [LARGE SCALE GENOMIC DNA]</scope>
    <source>
        <strain>K12 / W3110 / ATCC 27325 / DSM 5911</strain>
    </source>
</reference>
<reference key="5">
    <citation type="journal article" date="1977" name="J. Biol. Chem.">
        <title>N-acetylglutamate synthase of Escherichia coli: purification, characterization, and molecular properties.</title>
        <authorList>
            <person name="Marvil D.K."/>
            <person name="Leisinger T."/>
        </authorList>
    </citation>
    <scope>CATALYTIC ACTIVITY</scope>
    <scope>ACTIVITY REGULATION</scope>
    <scope>PATHWAY</scope>
    <scope>SUBUNIT</scope>
    <scope>SUBCELLULAR LOCATION</scope>
    <source>
        <strain>K12</strain>
    </source>
</reference>
<reference key="6">
    <citation type="journal article" date="1997" name="Electrophoresis">
        <title>Escherichia coli proteome analysis using the gene-protein database.</title>
        <authorList>
            <person name="VanBogelen R.A."/>
            <person name="Abshire K.Z."/>
            <person name="Moldover B."/>
            <person name="Olson E.R."/>
            <person name="Neidhardt F.C."/>
        </authorList>
    </citation>
    <scope>IDENTIFICATION BY 2D-GEL</scope>
</reference>